<name>3MGH_RUBXD</name>
<feature type="chain" id="PRO_0000265057" description="Putative 3-methyladenine DNA glycosylase">
    <location>
        <begin position="1"/>
        <end position="190"/>
    </location>
</feature>
<comment type="similarity">
    <text evidence="1">Belongs to the DNA glycosylase MPG family.</text>
</comment>
<gene>
    <name type="ordered locus">Rxyl_1309</name>
</gene>
<dbReference type="EC" id="3.2.2.-" evidence="1"/>
<dbReference type="EMBL" id="CP000386">
    <property type="protein sequence ID" value="ABG04273.1"/>
    <property type="molecule type" value="Genomic_DNA"/>
</dbReference>
<dbReference type="SMR" id="Q1AWF5"/>
<dbReference type="STRING" id="266117.Rxyl_1309"/>
<dbReference type="KEGG" id="rxy:Rxyl_1309"/>
<dbReference type="eggNOG" id="COG2094">
    <property type="taxonomic scope" value="Bacteria"/>
</dbReference>
<dbReference type="HOGENOM" id="CLU_060471_4_1_11"/>
<dbReference type="PhylomeDB" id="Q1AWF5"/>
<dbReference type="Proteomes" id="UP000006637">
    <property type="component" value="Chromosome"/>
</dbReference>
<dbReference type="GO" id="GO:0003905">
    <property type="term" value="F:alkylbase DNA N-glycosylase activity"/>
    <property type="evidence" value="ECO:0007669"/>
    <property type="project" value="InterPro"/>
</dbReference>
<dbReference type="GO" id="GO:0003677">
    <property type="term" value="F:DNA binding"/>
    <property type="evidence" value="ECO:0007669"/>
    <property type="project" value="InterPro"/>
</dbReference>
<dbReference type="GO" id="GO:0006284">
    <property type="term" value="P:base-excision repair"/>
    <property type="evidence" value="ECO:0007669"/>
    <property type="project" value="InterPro"/>
</dbReference>
<dbReference type="CDD" id="cd00540">
    <property type="entry name" value="AAG"/>
    <property type="match status" value="1"/>
</dbReference>
<dbReference type="Gene3D" id="3.10.300.10">
    <property type="entry name" value="Methylpurine-DNA glycosylase (MPG)"/>
    <property type="match status" value="1"/>
</dbReference>
<dbReference type="HAMAP" id="MF_00527">
    <property type="entry name" value="3MGH"/>
    <property type="match status" value="1"/>
</dbReference>
<dbReference type="InterPro" id="IPR011034">
    <property type="entry name" value="Formyl_transferase-like_C_sf"/>
</dbReference>
<dbReference type="InterPro" id="IPR003180">
    <property type="entry name" value="MPG"/>
</dbReference>
<dbReference type="InterPro" id="IPR036995">
    <property type="entry name" value="MPG_sf"/>
</dbReference>
<dbReference type="NCBIfam" id="TIGR00567">
    <property type="entry name" value="3mg"/>
    <property type="match status" value="1"/>
</dbReference>
<dbReference type="NCBIfam" id="NF002003">
    <property type="entry name" value="PRK00802.1-3"/>
    <property type="match status" value="1"/>
</dbReference>
<dbReference type="PANTHER" id="PTHR10429">
    <property type="entry name" value="DNA-3-METHYLADENINE GLYCOSYLASE"/>
    <property type="match status" value="1"/>
</dbReference>
<dbReference type="PANTHER" id="PTHR10429:SF0">
    <property type="entry name" value="DNA-3-METHYLADENINE GLYCOSYLASE"/>
    <property type="match status" value="1"/>
</dbReference>
<dbReference type="Pfam" id="PF02245">
    <property type="entry name" value="Pur_DNA_glyco"/>
    <property type="match status" value="1"/>
</dbReference>
<dbReference type="SUPFAM" id="SSF50486">
    <property type="entry name" value="FMT C-terminal domain-like"/>
    <property type="match status" value="1"/>
</dbReference>
<proteinExistence type="inferred from homology"/>
<sequence length="190" mass="20386">MDLLGCVLVSETPEGTCSGVIVETEAYRPEDPACHAYRGPSMRNRTLFGGPGLAYVYLSYGMHRLLNAVCEGEGVGSAVLIRSLAPLEGVPLMRRRRGRAADLCNGPGRLAESLGVGLSLDGHDLTLGEGLYIAPGPPPRGEIVSTTRIGVSRGAELPWRYLVLGERVSVPPRRISGRGLRRAWNVREPA</sequence>
<keyword id="KW-0227">DNA damage</keyword>
<keyword id="KW-0234">DNA repair</keyword>
<keyword id="KW-0378">Hydrolase</keyword>
<keyword id="KW-1185">Reference proteome</keyword>
<evidence type="ECO:0000255" key="1">
    <source>
        <dbReference type="HAMAP-Rule" id="MF_00527"/>
    </source>
</evidence>
<organism>
    <name type="scientific">Rubrobacter xylanophilus (strain DSM 9941 / JCM 11954 / NBRC 16129 / PRD-1)</name>
    <dbReference type="NCBI Taxonomy" id="266117"/>
    <lineage>
        <taxon>Bacteria</taxon>
        <taxon>Bacillati</taxon>
        <taxon>Actinomycetota</taxon>
        <taxon>Rubrobacteria</taxon>
        <taxon>Rubrobacterales</taxon>
        <taxon>Rubrobacteraceae</taxon>
        <taxon>Rubrobacter</taxon>
    </lineage>
</organism>
<accession>Q1AWF5</accession>
<reference key="1">
    <citation type="submission" date="2006-06" db="EMBL/GenBank/DDBJ databases">
        <title>Complete sequence of Rubrobacter xylanophilus DSM 9941.</title>
        <authorList>
            <consortium name="US DOE Joint Genome Institute"/>
            <person name="Copeland A."/>
            <person name="Lucas S."/>
            <person name="Lapidus A."/>
            <person name="Barry K."/>
            <person name="Detter J.C."/>
            <person name="Glavina del Rio T."/>
            <person name="Hammon N."/>
            <person name="Israni S."/>
            <person name="Dalin E."/>
            <person name="Tice H."/>
            <person name="Pitluck S."/>
            <person name="Munk A.C."/>
            <person name="Brettin T."/>
            <person name="Bruce D."/>
            <person name="Han C."/>
            <person name="Tapia R."/>
            <person name="Gilna P."/>
            <person name="Schmutz J."/>
            <person name="Larimer F."/>
            <person name="Land M."/>
            <person name="Hauser L."/>
            <person name="Kyrpides N."/>
            <person name="Lykidis A."/>
            <person name="da Costa M.S."/>
            <person name="Rainey F.A."/>
            <person name="Empadinhas N."/>
            <person name="Jolivet E."/>
            <person name="Battista J.R."/>
            <person name="Richardson P."/>
        </authorList>
    </citation>
    <scope>NUCLEOTIDE SEQUENCE [LARGE SCALE GENOMIC DNA]</scope>
    <source>
        <strain>DSM 9941 / JCM 11954 / NBRC 16129 / PRD-1</strain>
    </source>
</reference>
<protein>
    <recommendedName>
        <fullName evidence="1">Putative 3-methyladenine DNA glycosylase</fullName>
        <ecNumber evidence="1">3.2.2.-</ecNumber>
    </recommendedName>
</protein>